<name>DEF3_TRIKH</name>
<reference evidence="3" key="1">
    <citation type="journal article" date="2007" name="Biochimie">
        <title>Seed defensins from T. kiharae and related species: Genome localization of defensin-encoding genes.</title>
        <authorList>
            <person name="Odintsova T.I."/>
            <person name="Egorov T.A."/>
            <person name="Musolyamov A.K."/>
            <person name="Odintsova M.S."/>
            <person name="Pukhalsky V.A."/>
            <person name="Grishin E.V."/>
        </authorList>
    </citation>
    <scope>PROTEIN SEQUENCE</scope>
    <scope>MASS SPECTROMETRY</scope>
    <source>
        <tissue evidence="2">Seed</tissue>
    </source>
</reference>
<accession>P84970</accession>
<keyword id="KW-0929">Antimicrobial</keyword>
<keyword id="KW-0903">Direct protein sequencing</keyword>
<keyword id="KW-1015">Disulfide bond</keyword>
<keyword id="KW-0295">Fungicide</keyword>
<keyword id="KW-0611">Plant defense</keyword>
<dbReference type="SMR" id="P84970"/>
<dbReference type="GO" id="GO:0050832">
    <property type="term" value="P:defense response to fungus"/>
    <property type="evidence" value="ECO:0007669"/>
    <property type="project" value="UniProtKB-KW"/>
</dbReference>
<dbReference type="GO" id="GO:0031640">
    <property type="term" value="P:killing of cells of another organism"/>
    <property type="evidence" value="ECO:0007669"/>
    <property type="project" value="UniProtKB-KW"/>
</dbReference>
<dbReference type="Gene3D" id="3.30.30.10">
    <property type="entry name" value="Knottin, scorpion toxin-like"/>
    <property type="match status" value="1"/>
</dbReference>
<dbReference type="InterPro" id="IPR008176">
    <property type="entry name" value="Defensin_plant"/>
</dbReference>
<dbReference type="InterPro" id="IPR003614">
    <property type="entry name" value="Scorpion_toxin-like"/>
</dbReference>
<dbReference type="InterPro" id="IPR036574">
    <property type="entry name" value="Scorpion_toxin-like_sf"/>
</dbReference>
<dbReference type="Pfam" id="PF00304">
    <property type="entry name" value="Gamma-thionin"/>
    <property type="match status" value="1"/>
</dbReference>
<dbReference type="PRINTS" id="PR00288">
    <property type="entry name" value="PUROTHIONIN"/>
</dbReference>
<dbReference type="SMART" id="SM00505">
    <property type="entry name" value="Knot1"/>
    <property type="match status" value="1"/>
</dbReference>
<dbReference type="SUPFAM" id="SSF57095">
    <property type="entry name" value="Scorpion toxin-like"/>
    <property type="match status" value="1"/>
</dbReference>
<dbReference type="PROSITE" id="PS00940">
    <property type="entry name" value="GAMMA_THIONIN"/>
    <property type="match status" value="1"/>
</dbReference>
<sequence>RDCKSDSHKFHGACFSDTNCANVCQTEGFTRGKCDGIHCHCIKDC</sequence>
<evidence type="ECO:0000250" key="1">
    <source>
        <dbReference type="UniProtKB" id="Q8GTM0"/>
    </source>
</evidence>
<evidence type="ECO:0000269" key="2">
    <source>
    </source>
</evidence>
<evidence type="ECO:0000305" key="3"/>
<organism>
    <name type="scientific">Triticum kiharae</name>
    <name type="common">Wheat</name>
    <dbReference type="NCBI Taxonomy" id="376535"/>
    <lineage>
        <taxon>Eukaryota</taxon>
        <taxon>Viridiplantae</taxon>
        <taxon>Streptophyta</taxon>
        <taxon>Embryophyta</taxon>
        <taxon>Tracheophyta</taxon>
        <taxon>Spermatophyta</taxon>
        <taxon>Magnoliopsida</taxon>
        <taxon>Liliopsida</taxon>
        <taxon>Poales</taxon>
        <taxon>Poaceae</taxon>
        <taxon>BOP clade</taxon>
        <taxon>Pooideae</taxon>
        <taxon>Triticodae</taxon>
        <taxon>Triticeae</taxon>
        <taxon>Triticinae</taxon>
        <taxon>Triticum</taxon>
    </lineage>
</organism>
<proteinExistence type="evidence at protein level"/>
<comment type="function">
    <text evidence="1">Plant defense peptide.</text>
</comment>
<comment type="mass spectrometry"/>
<comment type="similarity">
    <text evidence="3">Belongs to the DEFL family.</text>
</comment>
<protein>
    <recommendedName>
        <fullName>Defensin Tk-AMP-D3</fullName>
    </recommendedName>
</protein>
<feature type="chain" id="PRO_0000287891" description="Defensin Tk-AMP-D3">
    <location>
        <begin position="1"/>
        <end position="45"/>
    </location>
</feature>
<feature type="disulfide bond" evidence="1">
    <location>
        <begin position="3"/>
        <end position="45"/>
    </location>
</feature>
<feature type="disulfide bond" evidence="1">
    <location>
        <begin position="14"/>
        <end position="34"/>
    </location>
</feature>
<feature type="disulfide bond" evidence="1">
    <location>
        <begin position="20"/>
        <end position="39"/>
    </location>
</feature>
<feature type="disulfide bond" evidence="1">
    <location>
        <begin position="24"/>
        <end position="41"/>
    </location>
</feature>